<keyword id="KW-0325">Glycoprotein</keyword>
<keyword id="KW-1017">Isopeptide bond</keyword>
<keyword id="KW-0472">Membrane</keyword>
<keyword id="KW-0597">Phosphoprotein</keyword>
<keyword id="KW-1185">Reference proteome</keyword>
<keyword id="KW-0677">Repeat</keyword>
<keyword id="KW-0762">Sugar transport</keyword>
<keyword id="KW-0812">Transmembrane</keyword>
<keyword id="KW-1133">Transmembrane helix</keyword>
<keyword id="KW-0813">Transport</keyword>
<keyword id="KW-0832">Ubl conjugation</keyword>
<reference key="1">
    <citation type="journal article" date="1995" name="Mol. Microbiol.">
        <title>Identification of novel HXT genes in Saccharomyces cerevisiae reveals the impact of individual hexose transporters on glycolytic flux.</title>
        <authorList>
            <person name="Reifenberger E."/>
            <person name="Ciriacy M."/>
        </authorList>
    </citation>
    <scope>NUCLEOTIDE SEQUENCE [GENOMIC DNA]</scope>
    <source>
        <strain>MC996</strain>
    </source>
</reference>
<reference key="2">
    <citation type="journal article" date="1997" name="Nature">
        <title>The nucleotide sequence of Saccharomyces cerevisiae chromosome IV.</title>
        <authorList>
            <person name="Jacq C."/>
            <person name="Alt-Moerbe J."/>
            <person name="Andre B."/>
            <person name="Arnold W."/>
            <person name="Bahr A."/>
            <person name="Ballesta J.P.G."/>
            <person name="Bargues M."/>
            <person name="Baron L."/>
            <person name="Becker A."/>
            <person name="Biteau N."/>
            <person name="Bloecker H."/>
            <person name="Blugeon C."/>
            <person name="Boskovic J."/>
            <person name="Brandt P."/>
            <person name="Brueckner M."/>
            <person name="Buitrago M.J."/>
            <person name="Coster F."/>
            <person name="Delaveau T."/>
            <person name="del Rey F."/>
            <person name="Dujon B."/>
            <person name="Eide L.G."/>
            <person name="Garcia-Cantalejo J.M."/>
            <person name="Goffeau A."/>
            <person name="Gomez-Peris A."/>
            <person name="Granotier C."/>
            <person name="Hanemann V."/>
            <person name="Hankeln T."/>
            <person name="Hoheisel J.D."/>
            <person name="Jaeger W."/>
            <person name="Jimenez A."/>
            <person name="Jonniaux J.-L."/>
            <person name="Kraemer C."/>
            <person name="Kuester H."/>
            <person name="Laamanen P."/>
            <person name="Legros Y."/>
            <person name="Louis E.J."/>
            <person name="Moeller-Rieker S."/>
            <person name="Monnet A."/>
            <person name="Moro M."/>
            <person name="Mueller-Auer S."/>
            <person name="Nussbaumer B."/>
            <person name="Paricio N."/>
            <person name="Paulin L."/>
            <person name="Perea J."/>
            <person name="Perez-Alonso M."/>
            <person name="Perez-Ortin J.E."/>
            <person name="Pohl T.M."/>
            <person name="Prydz H."/>
            <person name="Purnelle B."/>
            <person name="Rasmussen S.W."/>
            <person name="Remacha M.A."/>
            <person name="Revuelta J.L."/>
            <person name="Rieger M."/>
            <person name="Salom D."/>
            <person name="Saluz H.P."/>
            <person name="Saiz J.E."/>
            <person name="Saren A.-M."/>
            <person name="Schaefer M."/>
            <person name="Scharfe M."/>
            <person name="Schmidt E.R."/>
            <person name="Schneider C."/>
            <person name="Scholler P."/>
            <person name="Schwarz S."/>
            <person name="Soler-Mira A."/>
            <person name="Urrestarazu L.A."/>
            <person name="Verhasselt P."/>
            <person name="Vissers S."/>
            <person name="Voet M."/>
            <person name="Volckaert G."/>
            <person name="Wagner G."/>
            <person name="Wambutt R."/>
            <person name="Wedler E."/>
            <person name="Wedler H."/>
            <person name="Woelfl S."/>
            <person name="Harris D.E."/>
            <person name="Bowman S."/>
            <person name="Brown D."/>
            <person name="Churcher C.M."/>
            <person name="Connor R."/>
            <person name="Dedman K."/>
            <person name="Gentles S."/>
            <person name="Hamlin N."/>
            <person name="Hunt S."/>
            <person name="Jones L."/>
            <person name="McDonald S."/>
            <person name="Murphy L.D."/>
            <person name="Niblett D."/>
            <person name="Odell C."/>
            <person name="Oliver K."/>
            <person name="Rajandream M.A."/>
            <person name="Richards C."/>
            <person name="Shore L."/>
            <person name="Walsh S.V."/>
            <person name="Barrell B.G."/>
            <person name="Dietrich F.S."/>
            <person name="Mulligan J.T."/>
            <person name="Allen E."/>
            <person name="Araujo R."/>
            <person name="Aviles E."/>
            <person name="Berno A."/>
            <person name="Carpenter J."/>
            <person name="Chen E."/>
            <person name="Cherry J.M."/>
            <person name="Chung E."/>
            <person name="Duncan M."/>
            <person name="Hunicke-Smith S."/>
            <person name="Hyman R.W."/>
            <person name="Komp C."/>
            <person name="Lashkari D."/>
            <person name="Lew H."/>
            <person name="Lin D."/>
            <person name="Mosedale D."/>
            <person name="Nakahara K."/>
            <person name="Namath A."/>
            <person name="Oefner P."/>
            <person name="Oh C."/>
            <person name="Petel F.X."/>
            <person name="Roberts D."/>
            <person name="Schramm S."/>
            <person name="Schroeder M."/>
            <person name="Shogren T."/>
            <person name="Shroff N."/>
            <person name="Winant A."/>
            <person name="Yelton M.A."/>
            <person name="Botstein D."/>
            <person name="Davis R.W."/>
            <person name="Johnston M."/>
            <person name="Andrews S."/>
            <person name="Brinkman R."/>
            <person name="Cooper J."/>
            <person name="Ding H."/>
            <person name="Du Z."/>
            <person name="Favello A."/>
            <person name="Fulton L."/>
            <person name="Gattung S."/>
            <person name="Greco T."/>
            <person name="Hallsworth K."/>
            <person name="Hawkins J."/>
            <person name="Hillier L.W."/>
            <person name="Jier M."/>
            <person name="Johnson D."/>
            <person name="Johnston L."/>
            <person name="Kirsten J."/>
            <person name="Kucaba T."/>
            <person name="Langston Y."/>
            <person name="Latreille P."/>
            <person name="Le T."/>
            <person name="Mardis E."/>
            <person name="Menezes S."/>
            <person name="Miller N."/>
            <person name="Nhan M."/>
            <person name="Pauley A."/>
            <person name="Peluso D."/>
            <person name="Rifkin L."/>
            <person name="Riles L."/>
            <person name="Taich A."/>
            <person name="Trevaskis E."/>
            <person name="Vignati D."/>
            <person name="Wilcox L."/>
            <person name="Wohldman P."/>
            <person name="Vaudin M."/>
            <person name="Wilson R."/>
            <person name="Waterston R."/>
            <person name="Albermann K."/>
            <person name="Hani J."/>
            <person name="Heumann K."/>
            <person name="Kleine K."/>
            <person name="Mewes H.-W."/>
            <person name="Zollner A."/>
            <person name="Zaccaria P."/>
        </authorList>
    </citation>
    <scope>NUCLEOTIDE SEQUENCE [LARGE SCALE GENOMIC DNA]</scope>
    <source>
        <strain>ATCC 204508 / S288c</strain>
    </source>
</reference>
<reference key="3">
    <citation type="journal article" date="2014" name="G3 (Bethesda)">
        <title>The reference genome sequence of Saccharomyces cerevisiae: Then and now.</title>
        <authorList>
            <person name="Engel S.R."/>
            <person name="Dietrich F.S."/>
            <person name="Fisk D.G."/>
            <person name="Binkley G."/>
            <person name="Balakrishnan R."/>
            <person name="Costanzo M.C."/>
            <person name="Dwight S.S."/>
            <person name="Hitz B.C."/>
            <person name="Karra K."/>
            <person name="Nash R.S."/>
            <person name="Weng S."/>
            <person name="Wong E.D."/>
            <person name="Lloyd P."/>
            <person name="Skrzypek M.S."/>
            <person name="Miyasato S.R."/>
            <person name="Simison M."/>
            <person name="Cherry J.M."/>
        </authorList>
    </citation>
    <scope>GENOME REANNOTATION</scope>
    <source>
        <strain>ATCC 204508 / S288c</strain>
    </source>
</reference>
<reference key="4">
    <citation type="journal article" date="2003" name="Nature">
        <title>Global analysis of protein expression in yeast.</title>
        <authorList>
            <person name="Ghaemmaghami S."/>
            <person name="Huh W.-K."/>
            <person name="Bower K."/>
            <person name="Howson R.W."/>
            <person name="Belle A."/>
            <person name="Dephoure N."/>
            <person name="O'Shea E.K."/>
            <person name="Weissman J.S."/>
        </authorList>
    </citation>
    <scope>LEVEL OF PROTEIN EXPRESSION [LARGE SCALE ANALYSIS]</scope>
</reference>
<reference key="5">
    <citation type="journal article" date="2003" name="Nat. Biotechnol.">
        <title>A proteomics approach to understanding protein ubiquitination.</title>
        <authorList>
            <person name="Peng J."/>
            <person name="Schwartz D."/>
            <person name="Elias J.E."/>
            <person name="Thoreen C.C."/>
            <person name="Cheng D."/>
            <person name="Marsischky G."/>
            <person name="Roelofs J."/>
            <person name="Finley D."/>
            <person name="Gygi S.P."/>
        </authorList>
    </citation>
    <scope>UBIQUITINATION [LARGE SCALE ANALYSIS] AT LYS-560</scope>
    <scope>IDENTIFICATION BY MASS SPECTROMETRY</scope>
    <source>
        <strain>SUB592</strain>
    </source>
</reference>
<reference key="6">
    <citation type="journal article" date="2006" name="Proc. Natl. Acad. Sci. U.S.A.">
        <title>A global topology map of the Saccharomyces cerevisiae membrane proteome.</title>
        <authorList>
            <person name="Kim H."/>
            <person name="Melen K."/>
            <person name="Oesterberg M."/>
            <person name="von Heijne G."/>
        </authorList>
    </citation>
    <scope>TOPOLOGY [LARGE SCALE ANALYSIS]</scope>
    <source>
        <strain>ATCC 208353 / W303-1A</strain>
    </source>
</reference>
<reference key="7">
    <citation type="journal article" date="2009" name="Science">
        <title>Global analysis of Cdk1 substrate phosphorylation sites provides insights into evolution.</title>
        <authorList>
            <person name="Holt L.J."/>
            <person name="Tuch B.B."/>
            <person name="Villen J."/>
            <person name="Johnson A.D."/>
            <person name="Gygi S.P."/>
            <person name="Morgan D.O."/>
        </authorList>
    </citation>
    <scope>PHOSPHORYLATION [LARGE SCALE ANALYSIS] AT THR-556</scope>
    <scope>IDENTIFICATION BY MASS SPECTROMETRY [LARGE SCALE ANALYSIS]</scope>
</reference>
<dbReference type="EMBL" id="Z31692">
    <property type="protein sequence ID" value="CAA83497.1"/>
    <property type="molecule type" value="Genomic_DNA"/>
</dbReference>
<dbReference type="EMBL" id="U51032">
    <property type="protein sequence ID" value="AAB64778.1"/>
    <property type="molecule type" value="Genomic_DNA"/>
</dbReference>
<dbReference type="EMBL" id="BK006938">
    <property type="protein sequence ID" value="DAA12183.1"/>
    <property type="molecule type" value="Genomic_DNA"/>
</dbReference>
<dbReference type="PIR" id="S43186">
    <property type="entry name" value="S43186"/>
</dbReference>
<dbReference type="RefSeq" id="NP_010629.3">
    <property type="nucleotide sequence ID" value="NM_001180650.3"/>
</dbReference>
<dbReference type="SMR" id="P39004"/>
<dbReference type="BioGRID" id="32399">
    <property type="interactions" value="72"/>
</dbReference>
<dbReference type="DIP" id="DIP-5182N"/>
<dbReference type="FunCoup" id="P39004">
    <property type="interactions" value="1675"/>
</dbReference>
<dbReference type="IntAct" id="P39004">
    <property type="interactions" value="31"/>
</dbReference>
<dbReference type="MINT" id="P39004"/>
<dbReference type="STRING" id="4932.YDR342C"/>
<dbReference type="TCDB" id="2.A.1.1.31">
    <property type="family name" value="the major facilitator superfamily (mfs)"/>
</dbReference>
<dbReference type="GlyCosmos" id="P39004">
    <property type="glycosylation" value="2 sites, No reported glycans"/>
</dbReference>
<dbReference type="GlyGen" id="P39004">
    <property type="glycosylation" value="2 sites"/>
</dbReference>
<dbReference type="iPTMnet" id="P39004"/>
<dbReference type="PaxDb" id="4932-YDR342C"/>
<dbReference type="PeptideAtlas" id="P39004"/>
<dbReference type="EnsemblFungi" id="YDR342C_mRNA">
    <property type="protein sequence ID" value="YDR342C"/>
    <property type="gene ID" value="YDR342C"/>
</dbReference>
<dbReference type="GeneID" id="851943"/>
<dbReference type="KEGG" id="sce:YDR342C"/>
<dbReference type="AGR" id="SGD:S000002750"/>
<dbReference type="SGD" id="S000002750">
    <property type="gene designation" value="HXT7"/>
</dbReference>
<dbReference type="VEuPathDB" id="FungiDB:YDR342C"/>
<dbReference type="eggNOG" id="KOG0254">
    <property type="taxonomic scope" value="Eukaryota"/>
</dbReference>
<dbReference type="GeneTree" id="ENSGT00940000176280"/>
<dbReference type="HOGENOM" id="CLU_001265_30_1_1"/>
<dbReference type="InParanoid" id="P39004"/>
<dbReference type="OMA" id="CLVFMYF"/>
<dbReference type="OrthoDB" id="5141738at2759"/>
<dbReference type="BioCyc" id="YEAST:G3O-29897-MONOMER"/>
<dbReference type="PRO" id="PR:P39004"/>
<dbReference type="Proteomes" id="UP000002311">
    <property type="component" value="Chromosome IV"/>
</dbReference>
<dbReference type="RNAct" id="P39004">
    <property type="molecule type" value="protein"/>
</dbReference>
<dbReference type="GO" id="GO:0071944">
    <property type="term" value="C:cell periphery"/>
    <property type="evidence" value="ECO:0007005"/>
    <property type="project" value="SGD"/>
</dbReference>
<dbReference type="GO" id="GO:0005739">
    <property type="term" value="C:mitochondrion"/>
    <property type="evidence" value="ECO:0007005"/>
    <property type="project" value="SGD"/>
</dbReference>
<dbReference type="GO" id="GO:0005886">
    <property type="term" value="C:plasma membrane"/>
    <property type="evidence" value="ECO:0000314"/>
    <property type="project" value="SGD"/>
</dbReference>
<dbReference type="GO" id="GO:0005351">
    <property type="term" value="F:carbohydrate:proton symporter activity"/>
    <property type="evidence" value="ECO:0000318"/>
    <property type="project" value="GO_Central"/>
</dbReference>
<dbReference type="GO" id="GO:0055056">
    <property type="term" value="F:D-glucose transmembrane transporter activity"/>
    <property type="evidence" value="ECO:0000314"/>
    <property type="project" value="SGD"/>
</dbReference>
<dbReference type="GO" id="GO:0005353">
    <property type="term" value="F:fructose transmembrane transporter activity"/>
    <property type="evidence" value="ECO:0000304"/>
    <property type="project" value="SGD"/>
</dbReference>
<dbReference type="GO" id="GO:0015578">
    <property type="term" value="F:mannose transmembrane transporter activity"/>
    <property type="evidence" value="ECO:0000304"/>
    <property type="project" value="SGD"/>
</dbReference>
<dbReference type="GO" id="GO:0015146">
    <property type="term" value="F:pentose transmembrane transporter activity"/>
    <property type="evidence" value="ECO:0000315"/>
    <property type="project" value="SGD"/>
</dbReference>
<dbReference type="GO" id="GO:0008643">
    <property type="term" value="P:carbohydrate transport"/>
    <property type="evidence" value="ECO:0000318"/>
    <property type="project" value="GO_Central"/>
</dbReference>
<dbReference type="GO" id="GO:1904659">
    <property type="term" value="P:D-glucose transmembrane transport"/>
    <property type="evidence" value="ECO:0000314"/>
    <property type="project" value="SGD"/>
</dbReference>
<dbReference type="GO" id="GO:0008645">
    <property type="term" value="P:hexose transmembrane transport"/>
    <property type="evidence" value="ECO:0000304"/>
    <property type="project" value="SGD"/>
</dbReference>
<dbReference type="GO" id="GO:0055085">
    <property type="term" value="P:transmembrane transport"/>
    <property type="evidence" value="ECO:0000304"/>
    <property type="project" value="SGD"/>
</dbReference>
<dbReference type="CDD" id="cd17356">
    <property type="entry name" value="MFS_HXT"/>
    <property type="match status" value="1"/>
</dbReference>
<dbReference type="FunFam" id="1.20.1250.20:FF:000044">
    <property type="entry name" value="Hexose transporter Hxt3p"/>
    <property type="match status" value="1"/>
</dbReference>
<dbReference type="Gene3D" id="1.20.1250.20">
    <property type="entry name" value="MFS general substrate transporter like domains"/>
    <property type="match status" value="1"/>
</dbReference>
<dbReference type="InterPro" id="IPR020846">
    <property type="entry name" value="MFS_dom"/>
</dbReference>
<dbReference type="InterPro" id="IPR005828">
    <property type="entry name" value="MFS_sugar_transport-like"/>
</dbReference>
<dbReference type="InterPro" id="IPR050360">
    <property type="entry name" value="MFS_Sugar_Transporters"/>
</dbReference>
<dbReference type="InterPro" id="IPR036259">
    <property type="entry name" value="MFS_trans_sf"/>
</dbReference>
<dbReference type="InterPro" id="IPR003663">
    <property type="entry name" value="Sugar/inositol_transpt"/>
</dbReference>
<dbReference type="InterPro" id="IPR005829">
    <property type="entry name" value="Sugar_transporter_CS"/>
</dbReference>
<dbReference type="NCBIfam" id="TIGR00879">
    <property type="entry name" value="SP"/>
    <property type="match status" value="1"/>
</dbReference>
<dbReference type="PANTHER" id="PTHR48022:SF75">
    <property type="entry name" value="GALACTOSE TRANSPORTER-RELATED"/>
    <property type="match status" value="1"/>
</dbReference>
<dbReference type="PANTHER" id="PTHR48022">
    <property type="entry name" value="PLASTIDIC GLUCOSE TRANSPORTER 4"/>
    <property type="match status" value="1"/>
</dbReference>
<dbReference type="Pfam" id="PF00083">
    <property type="entry name" value="Sugar_tr"/>
    <property type="match status" value="1"/>
</dbReference>
<dbReference type="PRINTS" id="PR00171">
    <property type="entry name" value="SUGRTRNSPORT"/>
</dbReference>
<dbReference type="SUPFAM" id="SSF103473">
    <property type="entry name" value="MFS general substrate transporter"/>
    <property type="match status" value="1"/>
</dbReference>
<dbReference type="PROSITE" id="PS50850">
    <property type="entry name" value="MFS"/>
    <property type="match status" value="1"/>
</dbReference>
<dbReference type="PROSITE" id="PS00216">
    <property type="entry name" value="SUGAR_TRANSPORT_1"/>
    <property type="match status" value="1"/>
</dbReference>
<dbReference type="PROSITE" id="PS00217">
    <property type="entry name" value="SUGAR_TRANSPORT_2"/>
    <property type="match status" value="1"/>
</dbReference>
<comment type="function">
    <text>High-affinity glucose transporter.</text>
</comment>
<comment type="subcellular location">
    <subcellularLocation>
        <location>Membrane</location>
        <topology>Multi-pass membrane protein</topology>
    </subcellularLocation>
</comment>
<comment type="miscellaneous">
    <text evidence="3">Present with 7350 molecules/cell in log phase SD medium.</text>
</comment>
<comment type="similarity">
    <text evidence="4">Belongs to the major facilitator superfamily. Sugar transporter (TC 2.A.1.1) family.</text>
</comment>
<proteinExistence type="evidence at protein level"/>
<accession>P39004</accession>
<accession>D6VSX3</accession>
<protein>
    <recommendedName>
        <fullName>High-affinity hexose transporter HXT7</fullName>
    </recommendedName>
</protein>
<feature type="chain" id="PRO_0000050397" description="High-affinity hexose transporter HXT7">
    <location>
        <begin position="1"/>
        <end position="570"/>
    </location>
</feature>
<feature type="topological domain" description="Cytoplasmic" evidence="1">
    <location>
        <begin position="1"/>
        <end position="60"/>
    </location>
</feature>
<feature type="transmembrane region" description="Helical; Name=1" evidence="1">
    <location>
        <begin position="61"/>
        <end position="81"/>
    </location>
</feature>
<feature type="topological domain" description="Extracellular" evidence="1">
    <location>
        <begin position="82"/>
        <end position="116"/>
    </location>
</feature>
<feature type="transmembrane region" description="Helical; Name=2" evidence="1">
    <location>
        <begin position="117"/>
        <end position="137"/>
    </location>
</feature>
<feature type="topological domain" description="Cytoplasmic" evidence="1">
    <location>
        <begin position="138"/>
        <end position="143"/>
    </location>
</feature>
<feature type="transmembrane region" description="Helical; Name=3" evidence="1">
    <location>
        <begin position="144"/>
        <end position="164"/>
    </location>
</feature>
<feature type="topological domain" description="Extracellular" evidence="1">
    <location>
        <begin position="165"/>
        <end position="174"/>
    </location>
</feature>
<feature type="transmembrane region" description="Helical; Name=4" evidence="1">
    <location>
        <begin position="175"/>
        <end position="195"/>
    </location>
</feature>
<feature type="topological domain" description="Cytoplasmic" evidence="1">
    <location>
        <begin position="196"/>
        <end position="201"/>
    </location>
</feature>
<feature type="transmembrane region" description="Helical; Name=5" evidence="1">
    <location>
        <begin position="202"/>
        <end position="222"/>
    </location>
</feature>
<feature type="topological domain" description="Extracellular" evidence="1">
    <location>
        <begin position="223"/>
        <end position="236"/>
    </location>
</feature>
<feature type="transmembrane region" description="Helical; Name=6" evidence="1">
    <location>
        <begin position="237"/>
        <end position="257"/>
    </location>
</feature>
<feature type="topological domain" description="Cytoplasmic" evidence="1">
    <location>
        <begin position="258"/>
        <end position="340"/>
    </location>
</feature>
<feature type="transmembrane region" description="Helical; Name=7" evidence="1">
    <location>
        <begin position="341"/>
        <end position="357"/>
    </location>
</feature>
<feature type="topological domain" description="Extracellular" evidence="1">
    <location>
        <begin position="358"/>
        <end position="363"/>
    </location>
</feature>
<feature type="transmembrane region" description="Helical; Name=8" evidence="1">
    <location>
        <begin position="364"/>
        <end position="381"/>
    </location>
</feature>
<feature type="topological domain" description="Cytoplasmic" evidence="1">
    <location>
        <begin position="382"/>
        <end position="388"/>
    </location>
</feature>
<feature type="transmembrane region" description="Helical; Name=9" evidence="1">
    <location>
        <begin position="389"/>
        <end position="409"/>
    </location>
</feature>
<feature type="topological domain" description="Extracellular" evidence="1">
    <location>
        <begin position="410"/>
        <end position="431"/>
    </location>
</feature>
<feature type="transmembrane region" description="Helical; Name=10" evidence="1">
    <location>
        <begin position="432"/>
        <end position="452"/>
    </location>
</feature>
<feature type="topological domain" description="Cytoplasmic" evidence="1">
    <location>
        <begin position="453"/>
        <end position="469"/>
    </location>
</feature>
<feature type="transmembrane region" description="Helical; Name=11" evidence="1">
    <location>
        <begin position="470"/>
        <end position="490"/>
    </location>
</feature>
<feature type="topological domain" description="Extracellular" evidence="1">
    <location>
        <position position="491"/>
    </location>
</feature>
<feature type="transmembrane region" description="Helical; Name=12" evidence="1">
    <location>
        <begin position="492"/>
        <end position="512"/>
    </location>
</feature>
<feature type="topological domain" description="Cytoplasmic" evidence="1">
    <location>
        <begin position="513"/>
        <end position="570"/>
    </location>
</feature>
<feature type="modified residue" description="Phosphothreonine" evidence="5">
    <location>
        <position position="556"/>
    </location>
</feature>
<feature type="glycosylation site" description="N-linked (GlcNAc...) asparagine" evidence="1">
    <location>
        <position position="91"/>
    </location>
</feature>
<feature type="glycosylation site" description="N-linked (GlcNAc...) asparagine" evidence="1">
    <location>
        <position position="228"/>
    </location>
</feature>
<feature type="cross-link" description="Glycyl lysine isopeptide (Lys-Gly) (interchain with G-Cter in ubiquitin)" evidence="2">
    <location>
        <position position="560"/>
    </location>
</feature>
<name>HXT7_YEAST</name>
<gene>
    <name type="primary">HXT7</name>
    <name type="ordered locus">YDR342C</name>
    <name type="ORF">D9651.11</name>
</gene>
<organism>
    <name type="scientific">Saccharomyces cerevisiae (strain ATCC 204508 / S288c)</name>
    <name type="common">Baker's yeast</name>
    <dbReference type="NCBI Taxonomy" id="559292"/>
    <lineage>
        <taxon>Eukaryota</taxon>
        <taxon>Fungi</taxon>
        <taxon>Dikarya</taxon>
        <taxon>Ascomycota</taxon>
        <taxon>Saccharomycotina</taxon>
        <taxon>Saccharomycetes</taxon>
        <taxon>Saccharomycetales</taxon>
        <taxon>Saccharomycetaceae</taxon>
        <taxon>Saccharomyces</taxon>
    </lineage>
</organism>
<evidence type="ECO:0000255" key="1"/>
<evidence type="ECO:0000269" key="2">
    <source>
    </source>
</evidence>
<evidence type="ECO:0000269" key="3">
    <source>
    </source>
</evidence>
<evidence type="ECO:0000305" key="4"/>
<evidence type="ECO:0007744" key="5">
    <source>
    </source>
</evidence>
<sequence>MSQDAAIAEQTPVEHLSAVDSASHSVLSTPSNKAERDEIKAYGEGEEHEPVVEIPKRPASAYVTVSIMCIMIAFGGFVFGWDTGTISGFINQTDFIRRFGMKHKDGTNYLSKVRTGLIVSIFNIGCAIGGIILSKLGDMYGRKVGLIVVVVIYIIGIIIQIASINKWYQYFIGRIISGLGVGGIAVLSPMLISEVSPKHLRGTLVSCYQLMITAGIFLGYCTNFGTKNYSNSVQWRVPLGLCFAWALFMIGGMTFVPESPRYLAEVGKIEEAKRSIAVSNKVAVDDPSVLAEVEAVLAGVEAEKLAGNASWGELFSSKTKVLQRLIMGAMIQSLQQLTGDNYFFYYGTTIFKAVGLSDSFETSIVLGIVNFASTFVGIYVVERYGRRTCLLWGAASMTACMVVYASVGVTRLWPNGQDQPSSKGAGNCMIVFACFYIFCFATTWAPIPYVVVSETFPLRVKSKAMSIATAANWLWGFLIGFFTPFITGAINFYYGYVFMGCLVFMFFYVLLVVPETKGLTLEEVNTMWEEGVLPWKSASWVPPSRRGANYDAEEMTHDDKPLYKRMFSTK</sequence>